<sequence>MKTKELVIMALFAAIGAALHSIIPPFLGGMKPDMMLIMMFMGILLFPRVQNVLVIGIVTGIISALTTAFPAGQIPNIIDKPVSAFLFFSLFLLFRKSRKTGAAAVLTVIGTILSGIVFLSSALLIVGLPGGFAALFAAVVLPAAVLNTISMIIIYPIVQTILRRSSFMEAAK</sequence>
<keyword id="KW-0029">Amino-acid transport</keyword>
<keyword id="KW-1003">Cell membrane</keyword>
<keyword id="KW-0472">Membrane</keyword>
<keyword id="KW-1185">Reference proteome</keyword>
<keyword id="KW-0812">Transmembrane</keyword>
<keyword id="KW-1133">Transmembrane helix</keyword>
<keyword id="KW-0813">Transport</keyword>
<accession>O07515</accession>
<organism>
    <name type="scientific">Bacillus subtilis (strain 168)</name>
    <dbReference type="NCBI Taxonomy" id="224308"/>
    <lineage>
        <taxon>Bacteria</taxon>
        <taxon>Bacillati</taxon>
        <taxon>Bacillota</taxon>
        <taxon>Bacilli</taxon>
        <taxon>Bacillales</taxon>
        <taxon>Bacillaceae</taxon>
        <taxon>Bacillus</taxon>
    </lineage>
</organism>
<gene>
    <name type="primary">trpP</name>
    <name type="ordered locus">BSU10010</name>
</gene>
<reference key="1">
    <citation type="journal article" date="1998" name="Microbiology">
        <title>The 172 kb prkA-addAB region from 83 degrees to 97 degrees of the Bacillus subtilis chromosome contains several dysfunctional genes, the glyB marker, many genes encoding transporter proteins, and the ubiquitous hit gene.</title>
        <authorList>
            <person name="Noback M.A."/>
            <person name="Holsappel S."/>
            <person name="Kiewiet R."/>
            <person name="Terpstra P."/>
            <person name="Wambutt R."/>
            <person name="Wedler H."/>
            <person name="Venema G."/>
            <person name="Bron S."/>
        </authorList>
    </citation>
    <scope>NUCLEOTIDE SEQUENCE [GENOMIC DNA]</scope>
    <source>
        <strain>168</strain>
    </source>
</reference>
<reference key="2">
    <citation type="journal article" date="1997" name="Nature">
        <title>The complete genome sequence of the Gram-positive bacterium Bacillus subtilis.</title>
        <authorList>
            <person name="Kunst F."/>
            <person name="Ogasawara N."/>
            <person name="Moszer I."/>
            <person name="Albertini A.M."/>
            <person name="Alloni G."/>
            <person name="Azevedo V."/>
            <person name="Bertero M.G."/>
            <person name="Bessieres P."/>
            <person name="Bolotin A."/>
            <person name="Borchert S."/>
            <person name="Borriss R."/>
            <person name="Boursier L."/>
            <person name="Brans A."/>
            <person name="Braun M."/>
            <person name="Brignell S.C."/>
            <person name="Bron S."/>
            <person name="Brouillet S."/>
            <person name="Bruschi C.V."/>
            <person name="Caldwell B."/>
            <person name="Capuano V."/>
            <person name="Carter N.M."/>
            <person name="Choi S.-K."/>
            <person name="Codani J.-J."/>
            <person name="Connerton I.F."/>
            <person name="Cummings N.J."/>
            <person name="Daniel R.A."/>
            <person name="Denizot F."/>
            <person name="Devine K.M."/>
            <person name="Duesterhoeft A."/>
            <person name="Ehrlich S.D."/>
            <person name="Emmerson P.T."/>
            <person name="Entian K.-D."/>
            <person name="Errington J."/>
            <person name="Fabret C."/>
            <person name="Ferrari E."/>
            <person name="Foulger D."/>
            <person name="Fritz C."/>
            <person name="Fujita M."/>
            <person name="Fujita Y."/>
            <person name="Fuma S."/>
            <person name="Galizzi A."/>
            <person name="Galleron N."/>
            <person name="Ghim S.-Y."/>
            <person name="Glaser P."/>
            <person name="Goffeau A."/>
            <person name="Golightly E.J."/>
            <person name="Grandi G."/>
            <person name="Guiseppi G."/>
            <person name="Guy B.J."/>
            <person name="Haga K."/>
            <person name="Haiech J."/>
            <person name="Harwood C.R."/>
            <person name="Henaut A."/>
            <person name="Hilbert H."/>
            <person name="Holsappel S."/>
            <person name="Hosono S."/>
            <person name="Hullo M.-F."/>
            <person name="Itaya M."/>
            <person name="Jones L.-M."/>
            <person name="Joris B."/>
            <person name="Karamata D."/>
            <person name="Kasahara Y."/>
            <person name="Klaerr-Blanchard M."/>
            <person name="Klein C."/>
            <person name="Kobayashi Y."/>
            <person name="Koetter P."/>
            <person name="Koningstein G."/>
            <person name="Krogh S."/>
            <person name="Kumano M."/>
            <person name="Kurita K."/>
            <person name="Lapidus A."/>
            <person name="Lardinois S."/>
            <person name="Lauber J."/>
            <person name="Lazarevic V."/>
            <person name="Lee S.-M."/>
            <person name="Levine A."/>
            <person name="Liu H."/>
            <person name="Masuda S."/>
            <person name="Mauel C."/>
            <person name="Medigue C."/>
            <person name="Medina N."/>
            <person name="Mellado R.P."/>
            <person name="Mizuno M."/>
            <person name="Moestl D."/>
            <person name="Nakai S."/>
            <person name="Noback M."/>
            <person name="Noone D."/>
            <person name="O'Reilly M."/>
            <person name="Ogawa K."/>
            <person name="Ogiwara A."/>
            <person name="Oudega B."/>
            <person name="Park S.-H."/>
            <person name="Parro V."/>
            <person name="Pohl T.M."/>
            <person name="Portetelle D."/>
            <person name="Porwollik S."/>
            <person name="Prescott A.M."/>
            <person name="Presecan E."/>
            <person name="Pujic P."/>
            <person name="Purnelle B."/>
            <person name="Rapoport G."/>
            <person name="Rey M."/>
            <person name="Reynolds S."/>
            <person name="Rieger M."/>
            <person name="Rivolta C."/>
            <person name="Rocha E."/>
            <person name="Roche B."/>
            <person name="Rose M."/>
            <person name="Sadaie Y."/>
            <person name="Sato T."/>
            <person name="Scanlan E."/>
            <person name="Schleich S."/>
            <person name="Schroeter R."/>
            <person name="Scoffone F."/>
            <person name="Sekiguchi J."/>
            <person name="Sekowska A."/>
            <person name="Seror S.J."/>
            <person name="Serror P."/>
            <person name="Shin B.-S."/>
            <person name="Soldo B."/>
            <person name="Sorokin A."/>
            <person name="Tacconi E."/>
            <person name="Takagi T."/>
            <person name="Takahashi H."/>
            <person name="Takemaru K."/>
            <person name="Takeuchi M."/>
            <person name="Tamakoshi A."/>
            <person name="Tanaka T."/>
            <person name="Terpstra P."/>
            <person name="Tognoni A."/>
            <person name="Tosato V."/>
            <person name="Uchiyama S."/>
            <person name="Vandenbol M."/>
            <person name="Vannier F."/>
            <person name="Vassarotti A."/>
            <person name="Viari A."/>
            <person name="Wambutt R."/>
            <person name="Wedler E."/>
            <person name="Wedler H."/>
            <person name="Weitzenegger T."/>
            <person name="Winters P."/>
            <person name="Wipat A."/>
            <person name="Yamamoto H."/>
            <person name="Yamane K."/>
            <person name="Yasumoto K."/>
            <person name="Yata K."/>
            <person name="Yoshida K."/>
            <person name="Yoshikawa H.-F."/>
            <person name="Zumstein E."/>
            <person name="Yoshikawa H."/>
            <person name="Danchin A."/>
        </authorList>
    </citation>
    <scope>NUCLEOTIDE SEQUENCE [LARGE SCALE GENOMIC DNA]</scope>
    <source>
        <strain>168</strain>
    </source>
</reference>
<reference key="3">
    <citation type="journal article" date="2009" name="Microbiology">
        <title>From a consortium sequence to a unified sequence: the Bacillus subtilis 168 reference genome a decade later.</title>
        <authorList>
            <person name="Barbe V."/>
            <person name="Cruveiller S."/>
            <person name="Kunst F."/>
            <person name="Lenoble P."/>
            <person name="Meurice G."/>
            <person name="Sekowska A."/>
            <person name="Vallenet D."/>
            <person name="Wang T."/>
            <person name="Moszer I."/>
            <person name="Medigue C."/>
            <person name="Danchin A."/>
        </authorList>
    </citation>
    <scope>SEQUENCE REVISION TO 31 AND 130-132</scope>
</reference>
<reference key="4">
    <citation type="journal article" date="2000" name="J. Bacteriol.">
        <title>A Bacillus subtilis gene of previously unknown function, yhaG, is translationally regulated by tryptophan-activated TRAP and appears to be involved in tryptophan transport.</title>
        <authorList>
            <person name="Sarsero J.P."/>
            <person name="Merino E."/>
            <person name="Yanofsky C."/>
        </authorList>
    </citation>
    <scope>PUTATIVE FUNCTION</scope>
    <scope>INDUCTION</scope>
    <scope>DISRUPTION PHENOTYPE</scope>
</reference>
<dbReference type="EMBL" id="Y14077">
    <property type="protein sequence ID" value="CAA74412.1"/>
    <property type="molecule type" value="Genomic_DNA"/>
</dbReference>
<dbReference type="EMBL" id="AL009126">
    <property type="protein sequence ID" value="CAB12841.2"/>
    <property type="molecule type" value="Genomic_DNA"/>
</dbReference>
<dbReference type="PIR" id="A69818">
    <property type="entry name" value="A69818"/>
</dbReference>
<dbReference type="RefSeq" id="NP_388882.2">
    <property type="nucleotide sequence ID" value="NC_000964.3"/>
</dbReference>
<dbReference type="RefSeq" id="WP_003233236.1">
    <property type="nucleotide sequence ID" value="NZ_OZ025638.1"/>
</dbReference>
<dbReference type="SMR" id="O07515"/>
<dbReference type="FunCoup" id="O07515">
    <property type="interactions" value="14"/>
</dbReference>
<dbReference type="STRING" id="224308.BSU10010"/>
<dbReference type="TCDB" id="2.A.88.4.1">
    <property type="family name" value="the vitamin uptake transporter (vut) family"/>
</dbReference>
<dbReference type="PaxDb" id="224308-BSU10010"/>
<dbReference type="EnsemblBacteria" id="CAB12841">
    <property type="protein sequence ID" value="CAB12841"/>
    <property type="gene ID" value="BSU_10010"/>
</dbReference>
<dbReference type="GeneID" id="86874521"/>
<dbReference type="GeneID" id="936290"/>
<dbReference type="KEGG" id="bsu:BSU10010"/>
<dbReference type="PATRIC" id="fig|224308.179.peg.1077"/>
<dbReference type="eggNOG" id="ENOG5032SBU">
    <property type="taxonomic scope" value="Bacteria"/>
</dbReference>
<dbReference type="InParanoid" id="O07515"/>
<dbReference type="OrthoDB" id="2243651at2"/>
<dbReference type="PhylomeDB" id="O07515"/>
<dbReference type="BioCyc" id="BSUB:BSU10010-MONOMER"/>
<dbReference type="Proteomes" id="UP000001570">
    <property type="component" value="Chromosome"/>
</dbReference>
<dbReference type="GO" id="GO:0005886">
    <property type="term" value="C:plasma membrane"/>
    <property type="evidence" value="ECO:0007669"/>
    <property type="project" value="UniProtKB-SubCell"/>
</dbReference>
<dbReference type="GO" id="GO:0006865">
    <property type="term" value="P:amino acid transport"/>
    <property type="evidence" value="ECO:0007669"/>
    <property type="project" value="UniProtKB-KW"/>
</dbReference>
<dbReference type="Gene3D" id="1.10.1760.20">
    <property type="match status" value="1"/>
</dbReference>
<dbReference type="InterPro" id="IPR031360">
    <property type="entry name" value="TrpP"/>
</dbReference>
<dbReference type="Pfam" id="PF17099">
    <property type="entry name" value="TrpP"/>
    <property type="match status" value="1"/>
</dbReference>
<evidence type="ECO:0000255" key="1"/>
<evidence type="ECO:0000269" key="2">
    <source>
    </source>
</evidence>
<evidence type="ECO:0000305" key="3"/>
<proteinExistence type="evidence at transcript level"/>
<feature type="chain" id="PRO_0000109850" description="Probable tryptophan transport protein">
    <location>
        <begin position="1"/>
        <end position="172"/>
    </location>
</feature>
<feature type="transmembrane region" description="Helical" evidence="1">
    <location>
        <begin position="7"/>
        <end position="29"/>
    </location>
</feature>
<feature type="transmembrane region" description="Helical" evidence="1">
    <location>
        <begin position="49"/>
        <end position="71"/>
    </location>
</feature>
<feature type="transmembrane region" description="Helical" evidence="1">
    <location>
        <begin position="104"/>
        <end position="126"/>
    </location>
</feature>
<feature type="transmembrane region" description="Helical" evidence="1">
    <location>
        <begin position="136"/>
        <end position="158"/>
    </location>
</feature>
<feature type="sequence conflict" description="In Ref. 1; CAA74412." evidence="3" ref="1">
    <original>K</original>
    <variation>Q</variation>
    <location>
        <position position="31"/>
    </location>
</feature>
<feature type="sequence conflict" description="In Ref. 1; CAA74412." evidence="3" ref="1">
    <original>GGF</original>
    <variation>AVI</variation>
    <location>
        <begin position="130"/>
        <end position="132"/>
    </location>
</feature>
<comment type="function">
    <text>Probably involved in tryptophan uptake.</text>
</comment>
<comment type="subcellular location">
    <subcellularLocation>
        <location evidence="3">Cell membrane</location>
        <topology evidence="3">Multi-pass membrane protein</topology>
    </subcellularLocation>
</comment>
<comment type="induction">
    <text evidence="2">Its translation is regulated by tryptophan-activated RNA-binding regulatory protein (TRAP).</text>
</comment>
<comment type="disruption phenotype">
    <text evidence="2">Cells lacking this gene grow on 40-fold higher concentrations of the tryptophan analog 5-fluorotryptophan than the level that inhibits the wild-type strain.</text>
</comment>
<comment type="similarity">
    <text evidence="3">Belongs to the vitamin uptake transporter (VUT/ECF) (TC 2.A.88) family. TrpP subfamily.</text>
</comment>
<name>TRPP_BACSU</name>
<protein>
    <recommendedName>
        <fullName>Probable tryptophan transport protein</fullName>
    </recommendedName>
</protein>